<keyword id="KW-0687">Ribonucleoprotein</keyword>
<keyword id="KW-0689">Ribosomal protein</keyword>
<keyword id="KW-0694">RNA-binding</keyword>
<keyword id="KW-0699">rRNA-binding</keyword>
<comment type="function">
    <text evidence="1">Binds directly to 23S ribosomal RNA and is necessary for the in vitro assembly process of the 50S ribosomal subunit. It is not involved in the protein synthesizing functions of that subunit.</text>
</comment>
<comment type="similarity">
    <text evidence="1">Belongs to the bacterial ribosomal protein bL20 family.</text>
</comment>
<organism>
    <name type="scientific">Bacteroides fragilis (strain YCH46)</name>
    <dbReference type="NCBI Taxonomy" id="295405"/>
    <lineage>
        <taxon>Bacteria</taxon>
        <taxon>Pseudomonadati</taxon>
        <taxon>Bacteroidota</taxon>
        <taxon>Bacteroidia</taxon>
        <taxon>Bacteroidales</taxon>
        <taxon>Bacteroidaceae</taxon>
        <taxon>Bacteroides</taxon>
    </lineage>
</organism>
<reference key="1">
    <citation type="journal article" date="2004" name="Proc. Natl. Acad. Sci. U.S.A.">
        <title>Genomic analysis of Bacteroides fragilis reveals extensive DNA inversions regulating cell surface adaptation.</title>
        <authorList>
            <person name="Kuwahara T."/>
            <person name="Yamashita A."/>
            <person name="Hirakawa H."/>
            <person name="Nakayama H."/>
            <person name="Toh H."/>
            <person name="Okada N."/>
            <person name="Kuhara S."/>
            <person name="Hattori M."/>
            <person name="Hayashi T."/>
            <person name="Ohnishi Y."/>
        </authorList>
    </citation>
    <scope>NUCLEOTIDE SEQUENCE [LARGE SCALE GENOMIC DNA]</scope>
    <source>
        <strain>YCH46</strain>
    </source>
</reference>
<protein>
    <recommendedName>
        <fullName evidence="1">Large ribosomal subunit protein bL20</fullName>
    </recommendedName>
    <alternativeName>
        <fullName evidence="2">50S ribosomal protein L20</fullName>
    </alternativeName>
</protein>
<feature type="chain" id="PRO_0000177115" description="Large ribosomal subunit protein bL20">
    <location>
        <begin position="1"/>
        <end position="116"/>
    </location>
</feature>
<dbReference type="EMBL" id="AP006841">
    <property type="protein sequence ID" value="BAD48437.1"/>
    <property type="molecule type" value="Genomic_DNA"/>
</dbReference>
<dbReference type="RefSeq" id="WP_005786577.1">
    <property type="nucleotide sequence ID" value="NZ_UYXF01000008.1"/>
</dbReference>
<dbReference type="RefSeq" id="YP_098971.1">
    <property type="nucleotide sequence ID" value="NC_006347.1"/>
</dbReference>
<dbReference type="SMR" id="Q64VN9"/>
<dbReference type="STRING" id="295405.BF1690"/>
<dbReference type="GeneID" id="60369787"/>
<dbReference type="KEGG" id="bfr:BF1690"/>
<dbReference type="PATRIC" id="fig|295405.11.peg.1642"/>
<dbReference type="HOGENOM" id="CLU_123265_0_1_10"/>
<dbReference type="OrthoDB" id="9808966at2"/>
<dbReference type="Proteomes" id="UP000002197">
    <property type="component" value="Chromosome"/>
</dbReference>
<dbReference type="GO" id="GO:1990904">
    <property type="term" value="C:ribonucleoprotein complex"/>
    <property type="evidence" value="ECO:0007669"/>
    <property type="project" value="UniProtKB-KW"/>
</dbReference>
<dbReference type="GO" id="GO:0005840">
    <property type="term" value="C:ribosome"/>
    <property type="evidence" value="ECO:0007669"/>
    <property type="project" value="UniProtKB-KW"/>
</dbReference>
<dbReference type="GO" id="GO:0019843">
    <property type="term" value="F:rRNA binding"/>
    <property type="evidence" value="ECO:0007669"/>
    <property type="project" value="UniProtKB-UniRule"/>
</dbReference>
<dbReference type="GO" id="GO:0003735">
    <property type="term" value="F:structural constituent of ribosome"/>
    <property type="evidence" value="ECO:0007669"/>
    <property type="project" value="InterPro"/>
</dbReference>
<dbReference type="GO" id="GO:0000027">
    <property type="term" value="P:ribosomal large subunit assembly"/>
    <property type="evidence" value="ECO:0007669"/>
    <property type="project" value="UniProtKB-UniRule"/>
</dbReference>
<dbReference type="GO" id="GO:0006412">
    <property type="term" value="P:translation"/>
    <property type="evidence" value="ECO:0007669"/>
    <property type="project" value="InterPro"/>
</dbReference>
<dbReference type="CDD" id="cd07026">
    <property type="entry name" value="Ribosomal_L20"/>
    <property type="match status" value="1"/>
</dbReference>
<dbReference type="FunFam" id="1.10.1900.20:FF:000001">
    <property type="entry name" value="50S ribosomal protein L20"/>
    <property type="match status" value="1"/>
</dbReference>
<dbReference type="Gene3D" id="6.10.160.10">
    <property type="match status" value="1"/>
</dbReference>
<dbReference type="Gene3D" id="1.10.1900.20">
    <property type="entry name" value="Ribosomal protein L20"/>
    <property type="match status" value="1"/>
</dbReference>
<dbReference type="HAMAP" id="MF_00382">
    <property type="entry name" value="Ribosomal_bL20"/>
    <property type="match status" value="1"/>
</dbReference>
<dbReference type="InterPro" id="IPR005813">
    <property type="entry name" value="Ribosomal_bL20"/>
</dbReference>
<dbReference type="InterPro" id="IPR049946">
    <property type="entry name" value="RIBOSOMAL_L20_CS"/>
</dbReference>
<dbReference type="InterPro" id="IPR035566">
    <property type="entry name" value="Ribosomal_protein_bL20_C"/>
</dbReference>
<dbReference type="NCBIfam" id="TIGR01032">
    <property type="entry name" value="rplT_bact"/>
    <property type="match status" value="1"/>
</dbReference>
<dbReference type="PANTHER" id="PTHR10986">
    <property type="entry name" value="39S RIBOSOMAL PROTEIN L20"/>
    <property type="match status" value="1"/>
</dbReference>
<dbReference type="Pfam" id="PF00453">
    <property type="entry name" value="Ribosomal_L20"/>
    <property type="match status" value="1"/>
</dbReference>
<dbReference type="PRINTS" id="PR00062">
    <property type="entry name" value="RIBOSOMALL20"/>
</dbReference>
<dbReference type="SUPFAM" id="SSF74731">
    <property type="entry name" value="Ribosomal protein L20"/>
    <property type="match status" value="1"/>
</dbReference>
<dbReference type="PROSITE" id="PS00937">
    <property type="entry name" value="RIBOSOMAL_L20"/>
    <property type="match status" value="1"/>
</dbReference>
<sequence>MPRSVNHVASKARRKKILKLTRGYFGARKNVWTVAKNTWEKGLTYAFRDRRNKKRNFRALWIQRINAAARLEGMSYSKLMGGLHKAGIEINRKVLADLAVNHPEAFKAVVAKAKVA</sequence>
<gene>
    <name evidence="1" type="primary">rplT</name>
    <name type="ordered locus">BF1690</name>
</gene>
<proteinExistence type="inferred from homology"/>
<name>RL20_BACFR</name>
<evidence type="ECO:0000255" key="1">
    <source>
        <dbReference type="HAMAP-Rule" id="MF_00382"/>
    </source>
</evidence>
<evidence type="ECO:0000305" key="2"/>
<accession>Q64VN9</accession>